<keyword id="KW-0002">3D-structure</keyword>
<keyword id="KW-0044">Antibiotic</keyword>
<keyword id="KW-0929">Antimicrobial</keyword>
<keyword id="KW-0211">Defensin</keyword>
<keyword id="KW-1015">Disulfide bond</keyword>
<keyword id="KW-1267">Proteomics identification</keyword>
<keyword id="KW-1185">Reference proteome</keyword>
<keyword id="KW-0964">Secreted</keyword>
<keyword id="KW-0732">Signal</keyword>
<proteinExistence type="evidence at protein level"/>
<gene>
    <name type="primary">DEFB104A</name>
    <name type="synonym">DEFB104</name>
    <name type="synonym">DEFB4</name>
</gene>
<gene>
    <name type="primary">DEFB104B</name>
</gene>
<comment type="function">
    <text evidence="3">Has antimicrobial activity. Synergistic effects with lysozyme and DEFB103.</text>
</comment>
<comment type="subcellular location">
    <subcellularLocation>
        <location>Secreted</location>
    </subcellularLocation>
</comment>
<comment type="tissue specificity">
    <text evidence="3">High expression in the testis. Gastric antrum exhibited relatively high levels. A lower expression is observed in uterus and neutrophils thyroid gland, lung, and kidney. No detectable expression in other tissues tested.</text>
</comment>
<comment type="induction">
    <text>Antimicrobial activity is decreased when the sodium chloride concentration is increased.</text>
</comment>
<comment type="similarity">
    <text evidence="5">Belongs to the beta-defensin family.</text>
</comment>
<evidence type="ECO:0000250" key="1"/>
<evidence type="ECO:0000255" key="2"/>
<evidence type="ECO:0000269" key="3">
    <source>
    </source>
</evidence>
<evidence type="ECO:0000269" key="4">
    <source>
    </source>
</evidence>
<evidence type="ECO:0000305" key="5"/>
<evidence type="ECO:0007829" key="6">
    <source>
        <dbReference type="PDB" id="5KI9"/>
    </source>
</evidence>
<protein>
    <recommendedName>
        <fullName>Beta-defensin 104</fullName>
    </recommendedName>
    <alternativeName>
        <fullName>Beta-defensin 4</fullName>
        <shortName>BD-4</shortName>
        <shortName>DEFB-4</shortName>
        <shortName>hBD-4</shortName>
    </alternativeName>
    <alternativeName>
        <fullName>Defensin, beta 104</fullName>
    </alternativeName>
</protein>
<feature type="signal peptide" evidence="2">
    <location>
        <begin position="1"/>
        <end position="22"/>
    </location>
</feature>
<feature type="peptide" id="PRO_0000006973" description="Beta-defensin 104">
    <location>
        <begin position="23"/>
        <end position="72"/>
    </location>
</feature>
<feature type="disulfide bond" evidence="1">
    <location>
        <begin position="30"/>
        <end position="57"/>
    </location>
</feature>
<feature type="disulfide bond" evidence="1">
    <location>
        <begin position="37"/>
        <end position="51"/>
    </location>
</feature>
<feature type="disulfide bond" evidence="1">
    <location>
        <begin position="41"/>
        <end position="58"/>
    </location>
</feature>
<feature type="sequence variant" id="VAR_024767" description="In dbSNP:rs2680507." evidence="3 4">
    <original>I</original>
    <variation>V</variation>
    <location>
        <position position="10"/>
    </location>
</feature>
<feature type="sequence conflict" description="In Ref. 2; AAI00851." evidence="5" ref="2">
    <original>R</original>
    <variation>Q</variation>
    <location>
        <position position="38"/>
    </location>
</feature>
<feature type="turn" evidence="6">
    <location>
        <begin position="31"/>
        <end position="34"/>
    </location>
</feature>
<feature type="strand" evidence="6">
    <location>
        <begin position="35"/>
        <end position="38"/>
    </location>
</feature>
<feature type="strand" evidence="6">
    <location>
        <begin position="45"/>
        <end position="50"/>
    </location>
</feature>
<feature type="strand" evidence="6">
    <location>
        <begin position="56"/>
        <end position="60"/>
    </location>
</feature>
<sequence length="72" mass="8526">MQRLVLLLAISLLLYQDLPVRSEFELDRICGYGTARCRKKCRSQEYRIGRCPNTYACCLRKWDESLLNRTKP</sequence>
<reference key="1">
    <citation type="journal article" date="2001" name="FASEB J.">
        <title>Human beta-defensin 4: a novel inducible peptide with a specific salt-sensitive spectrum of antimicrobial activity.</title>
        <authorList>
            <person name="Conejo-Garcia J.-R."/>
            <person name="Krause A."/>
            <person name="Schulz S."/>
            <person name="Rodriguez-Jimenez F.-J."/>
            <person name="Kluever E."/>
            <person name="Adermann K."/>
            <person name="Forssmann U."/>
            <person name="Frimpong-Boateng A."/>
            <person name="Bals R."/>
            <person name="Forssmann W.-G."/>
        </authorList>
    </citation>
    <scope>NUCLEOTIDE SEQUENCE [GENOMIC DNA / MRNA]</scope>
    <scope>FUNCTION</scope>
    <scope>VARIANT VAL-10</scope>
    <scope>TISSUE SPECIFICITY</scope>
    <source>
        <tissue>Lung</tissue>
    </source>
</reference>
<reference key="2">
    <citation type="journal article" date="2004" name="Genome Res.">
        <title>The status, quality, and expansion of the NIH full-length cDNA project: the Mammalian Gene Collection (MGC).</title>
        <authorList>
            <consortium name="The MGC Project Team"/>
        </authorList>
    </citation>
    <scope>NUCLEOTIDE SEQUENCE [LARGE SCALE MRNA]</scope>
    <scope>VARIANT VAL-10</scope>
</reference>
<name>D104A_HUMAN</name>
<accession>Q8WTQ1</accession>
<accession>Q496I2</accession>
<accession>Q496I3</accession>
<accession>Q496I4</accession>
<dbReference type="EMBL" id="AJ314834">
    <property type="protein sequence ID" value="CAC85511.1"/>
    <property type="molecule type" value="mRNA"/>
</dbReference>
<dbReference type="EMBL" id="AJ314835">
    <property type="protein sequence ID" value="CAC85520.1"/>
    <property type="molecule type" value="Genomic_DNA"/>
</dbReference>
<dbReference type="EMBL" id="BC100848">
    <property type="protein sequence ID" value="AAI00849.1"/>
    <property type="molecule type" value="mRNA"/>
</dbReference>
<dbReference type="EMBL" id="BC100849">
    <property type="protein sequence ID" value="AAI00850.1"/>
    <property type="molecule type" value="mRNA"/>
</dbReference>
<dbReference type="EMBL" id="BC100850">
    <property type="protein sequence ID" value="AAI00851.1"/>
    <property type="molecule type" value="mRNA"/>
</dbReference>
<dbReference type="EMBL" id="BC100851">
    <property type="protein sequence ID" value="AAI00852.1"/>
    <property type="molecule type" value="mRNA"/>
</dbReference>
<dbReference type="CCDS" id="CCDS34812.1"/>
<dbReference type="CCDS" id="CCDS34834.1"/>
<dbReference type="RefSeq" id="NP_001035792.1">
    <property type="nucleotide sequence ID" value="NM_001040702.1"/>
</dbReference>
<dbReference type="RefSeq" id="NP_525128.2">
    <property type="nucleotide sequence ID" value="NM_080389.3"/>
</dbReference>
<dbReference type="RefSeq" id="XP_016885975.1">
    <property type="nucleotide sequence ID" value="XM_017030486.1"/>
</dbReference>
<dbReference type="PDB" id="5KI9">
    <property type="method" value="X-ray"/>
    <property type="resolution" value="1.60 A"/>
    <property type="chains" value="A=23-65"/>
</dbReference>
<dbReference type="PDBsum" id="5KI9"/>
<dbReference type="SMR" id="Q8WTQ1"/>
<dbReference type="BioGRID" id="126629">
    <property type="interactions" value="12"/>
</dbReference>
<dbReference type="BioGRID" id="139024">
    <property type="interactions" value="1"/>
</dbReference>
<dbReference type="FunCoup" id="Q8WTQ1">
    <property type="interactions" value="5"/>
</dbReference>
<dbReference type="IntAct" id="Q8WTQ1">
    <property type="interactions" value="6"/>
</dbReference>
<dbReference type="STRING" id="9606.ENSP00000320813"/>
<dbReference type="iPTMnet" id="Q8WTQ1"/>
<dbReference type="PhosphoSitePlus" id="Q8WTQ1"/>
<dbReference type="BioMuta" id="DEFB104A"/>
<dbReference type="DMDM" id="118572637"/>
<dbReference type="MassIVE" id="Q8WTQ1"/>
<dbReference type="PaxDb" id="9606-ENSP00000320813"/>
<dbReference type="PeptideAtlas" id="Q8WTQ1"/>
<dbReference type="ProteomicsDB" id="74581"/>
<dbReference type="Antibodypedia" id="52858">
    <property type="antibodies" value="32 antibodies from 14 providers"/>
</dbReference>
<dbReference type="Antibodypedia" id="73481">
    <property type="antibodies" value="57 antibodies from 9 providers"/>
</dbReference>
<dbReference type="DNASU" id="140596"/>
<dbReference type="Ensembl" id="ENST00000314265.3">
    <property type="protein sequence ID" value="ENSP00000320813.2"/>
    <property type="gene ID" value="ENSG00000176782.3"/>
</dbReference>
<dbReference type="Ensembl" id="ENST00000316169.2">
    <property type="protein sequence ID" value="ENSP00000322191.2"/>
    <property type="gene ID" value="ENSG00000177023.2"/>
</dbReference>
<dbReference type="Ensembl" id="ENST00000616398.2">
    <property type="protein sequence ID" value="ENSP00000481976.1"/>
    <property type="gene ID" value="ENSG00000277006.2"/>
</dbReference>
<dbReference type="Ensembl" id="ENST00000646913.2">
    <property type="protein sequence ID" value="ENSP00000494886.1"/>
    <property type="gene ID" value="ENSG00000285034.3"/>
</dbReference>
<dbReference type="Ensembl" id="ENST00000647293.3">
    <property type="protein sequence ID" value="ENSP00000495491.1"/>
    <property type="gene ID" value="ENSG00000285356.3"/>
</dbReference>
<dbReference type="GeneID" id="140596"/>
<dbReference type="GeneID" id="503618"/>
<dbReference type="KEGG" id="hsa:140596"/>
<dbReference type="KEGG" id="hsa:503618"/>
<dbReference type="MANE-Select" id="ENST00000314265.3">
    <property type="protein sequence ID" value="ENSP00000320813.2"/>
    <property type="RefSeq nucleotide sequence ID" value="NM_080389.3"/>
    <property type="RefSeq protein sequence ID" value="NP_525128.2"/>
</dbReference>
<dbReference type="MANE-Select" id="ENST00000316169.2">
    <property type="protein sequence ID" value="ENSP00000322191.2"/>
    <property type="RefSeq nucleotide sequence ID" value="NM_001040702.1"/>
    <property type="RefSeq protein sequence ID" value="NP_001035792.1"/>
</dbReference>
<dbReference type="UCSC" id="uc003wrn.3">
    <property type="organism name" value="human"/>
</dbReference>
<dbReference type="AGR" id="HGNC:18115"/>
<dbReference type="AGR" id="HGNC:26165"/>
<dbReference type="CTD" id="140596"/>
<dbReference type="CTD" id="503618"/>
<dbReference type="DisGeNET" id="140596"/>
<dbReference type="DisGeNET" id="503618"/>
<dbReference type="GeneCards" id="DEFB104A"/>
<dbReference type="GeneCards" id="DEFB104B"/>
<dbReference type="HGNC" id="HGNC:18115">
    <property type="gene designation" value="DEFB104A"/>
</dbReference>
<dbReference type="HGNC" id="HGNC:26165">
    <property type="gene designation" value="DEFB104B"/>
</dbReference>
<dbReference type="HPA" id="ENSG00000176782">
    <property type="expression patterns" value="Tissue enriched (epididymis)"/>
</dbReference>
<dbReference type="HPA" id="ENSG00000177023">
    <property type="expression patterns" value="Not detected"/>
</dbReference>
<dbReference type="neXtProt" id="NX_Q8WTQ1"/>
<dbReference type="OpenTargets" id="ENSG00000177023"/>
<dbReference type="PharmGKB" id="PA142671990"/>
<dbReference type="VEuPathDB" id="HostDB:ENSG00000176782"/>
<dbReference type="VEuPathDB" id="HostDB:ENSG00000177023"/>
<dbReference type="eggNOG" id="ENOG502TDUP">
    <property type="taxonomic scope" value="Eukaryota"/>
</dbReference>
<dbReference type="GeneTree" id="ENSGT00940000164302"/>
<dbReference type="HOGENOM" id="CLU_202010_0_0_1"/>
<dbReference type="InParanoid" id="Q8WTQ1"/>
<dbReference type="OMA" id="KCQNQEY"/>
<dbReference type="OrthoDB" id="9628817at2759"/>
<dbReference type="PAN-GO" id="Q8WTQ1">
    <property type="GO annotations" value="1 GO annotation based on evolutionary models"/>
</dbReference>
<dbReference type="PhylomeDB" id="Q8WTQ1"/>
<dbReference type="PathwayCommons" id="Q8WTQ1"/>
<dbReference type="Reactome" id="R-HSA-1461957">
    <property type="pathway name" value="Beta defensins"/>
</dbReference>
<dbReference type="Reactome" id="R-HSA-1461973">
    <property type="pathway name" value="Defensins"/>
</dbReference>
<dbReference type="SignaLink" id="Q8WTQ1"/>
<dbReference type="BioGRID-ORCS" id="140596">
    <property type="hits" value="7 hits in 881 CRISPR screens"/>
</dbReference>
<dbReference type="BioGRID-ORCS" id="503618">
    <property type="hits" value="15 hits in 656 CRISPR screens"/>
</dbReference>
<dbReference type="GeneWiki" id="DEFB104A"/>
<dbReference type="Pharos" id="Q8WTQ1">
    <property type="development level" value="Tbio"/>
</dbReference>
<dbReference type="PRO" id="PR:Q8WTQ1"/>
<dbReference type="Proteomes" id="UP000005640">
    <property type="component" value="Chromosome 8"/>
</dbReference>
<dbReference type="RNAct" id="Q8WTQ1">
    <property type="molecule type" value="protein"/>
</dbReference>
<dbReference type="Bgee" id="ENSG00000176782">
    <property type="expression patterns" value="Expressed in lower esophagus mucosa and 30 other cell types or tissues"/>
</dbReference>
<dbReference type="GO" id="GO:0005576">
    <property type="term" value="C:extracellular region"/>
    <property type="evidence" value="ECO:0007669"/>
    <property type="project" value="UniProtKB-SubCell"/>
</dbReference>
<dbReference type="GO" id="GO:0042056">
    <property type="term" value="F:chemoattractant activity"/>
    <property type="evidence" value="ECO:0000314"/>
    <property type="project" value="UniProtKB"/>
</dbReference>
<dbReference type="GO" id="GO:1904628">
    <property type="term" value="P:cellular response to phorbol 13-acetate 12-myristate"/>
    <property type="evidence" value="ECO:0000314"/>
    <property type="project" value="UniProtKB"/>
</dbReference>
<dbReference type="GO" id="GO:0050829">
    <property type="term" value="P:defense response to Gram-negative bacterium"/>
    <property type="evidence" value="ECO:0000314"/>
    <property type="project" value="UniProtKB"/>
</dbReference>
<dbReference type="GO" id="GO:0050830">
    <property type="term" value="P:defense response to Gram-positive bacterium"/>
    <property type="evidence" value="ECO:0000314"/>
    <property type="project" value="UniProtKB"/>
</dbReference>
<dbReference type="GO" id="GO:0045087">
    <property type="term" value="P:innate immune response"/>
    <property type="evidence" value="ECO:0000314"/>
    <property type="project" value="UniProtKB"/>
</dbReference>
<dbReference type="GO" id="GO:0002548">
    <property type="term" value="P:monocyte chemotaxis"/>
    <property type="evidence" value="ECO:0000314"/>
    <property type="project" value="UniProtKB"/>
</dbReference>
<dbReference type="GO" id="GO:0050918">
    <property type="term" value="P:positive chemotaxis"/>
    <property type="evidence" value="ECO:0000314"/>
    <property type="project" value="UniProtKB"/>
</dbReference>
<dbReference type="InterPro" id="IPR025933">
    <property type="entry name" value="Beta_defensin_dom"/>
</dbReference>
<dbReference type="Pfam" id="PF13841">
    <property type="entry name" value="Defensin_beta_2"/>
    <property type="match status" value="1"/>
</dbReference>
<organism>
    <name type="scientific">Homo sapiens</name>
    <name type="common">Human</name>
    <dbReference type="NCBI Taxonomy" id="9606"/>
    <lineage>
        <taxon>Eukaryota</taxon>
        <taxon>Metazoa</taxon>
        <taxon>Chordata</taxon>
        <taxon>Craniata</taxon>
        <taxon>Vertebrata</taxon>
        <taxon>Euteleostomi</taxon>
        <taxon>Mammalia</taxon>
        <taxon>Eutheria</taxon>
        <taxon>Euarchontoglires</taxon>
        <taxon>Primates</taxon>
        <taxon>Haplorrhini</taxon>
        <taxon>Catarrhini</taxon>
        <taxon>Hominidae</taxon>
        <taxon>Homo</taxon>
    </lineage>
</organism>